<sequence>MAQPGKPQSVLELSRLLNIPLDDCVVPCNFCKRFLSYTELTDFDTKCLSLIWKDDFVFACCRYCCVATAAFEFENYFVESVIGWEIEQKENTPLSDIIVRCHHCLKLLNQIEKLDICGRSELFHKVRRGWKGLCRQCKQI</sequence>
<protein>
    <recommendedName>
        <fullName evidence="1">Protein E6</fullName>
    </recommendedName>
</protein>
<reference key="1">
    <citation type="submission" date="1995-10" db="EMBL/GenBank/DDBJ databases">
        <authorList>
            <person name="Delius H."/>
        </authorList>
    </citation>
    <scope>NUCLEOTIDE SEQUENCE [GENOMIC DNA]</scope>
</reference>
<keyword id="KW-0010">Activator</keyword>
<keyword id="KW-0238">DNA-binding</keyword>
<keyword id="KW-0244">Early protein</keyword>
<keyword id="KW-1035">Host cytoplasm</keyword>
<keyword id="KW-1048">Host nucleus</keyword>
<keyword id="KW-0945">Host-virus interaction</keyword>
<keyword id="KW-1090">Inhibition of host innate immune response by virus</keyword>
<keyword id="KW-0479">Metal-binding</keyword>
<keyword id="KW-1119">Modulation of host cell apoptosis by virus</keyword>
<keyword id="KW-1185">Reference proteome</keyword>
<keyword id="KW-0804">Transcription</keyword>
<keyword id="KW-0805">Transcription regulation</keyword>
<keyword id="KW-0899">Viral immunoevasion</keyword>
<keyword id="KW-0862">Zinc</keyword>
<keyword id="KW-0863">Zinc-finger</keyword>
<feature type="chain" id="PRO_0000133344" description="Protein E6">
    <location>
        <begin position="1"/>
        <end position="140"/>
    </location>
</feature>
<feature type="zinc finger region" evidence="1">
    <location>
        <begin position="28"/>
        <end position="64"/>
    </location>
</feature>
<feature type="zinc finger region" evidence="1">
    <location>
        <begin position="101"/>
        <end position="137"/>
    </location>
</feature>
<organism>
    <name type="scientific">Human papillomavirus 24</name>
    <dbReference type="NCBI Taxonomy" id="37956"/>
    <lineage>
        <taxon>Viruses</taxon>
        <taxon>Monodnaviria</taxon>
        <taxon>Shotokuvirae</taxon>
        <taxon>Cossaviricota</taxon>
        <taxon>Papovaviricetes</taxon>
        <taxon>Zurhausenvirales</taxon>
        <taxon>Papillomaviridae</taxon>
        <taxon>Firstpapillomavirinae</taxon>
        <taxon>Betapapillomavirus</taxon>
        <taxon>Betapapillomavirus 1</taxon>
    </lineage>
</organism>
<accession>P50777</accession>
<evidence type="ECO:0000255" key="1">
    <source>
        <dbReference type="HAMAP-Rule" id="MF_04006"/>
    </source>
</evidence>
<evidence type="ECO:0000305" key="2"/>
<gene>
    <name evidence="1" type="primary">E6</name>
</gene>
<proteinExistence type="inferred from homology"/>
<organismHost>
    <name type="scientific">Homo sapiens</name>
    <name type="common">Human</name>
    <dbReference type="NCBI Taxonomy" id="9606"/>
</organismHost>
<comment type="function">
    <text evidence="1">Plays a major role in the induction and maintenance of cellular transformation. E6 associates with host UBE3A/E6-AP ubiquitin-protein ligase and modulates its activity. Protects host keratinocytes from apoptosis by mediating the degradation of host BAK1. May also inhibit host immune response.</text>
</comment>
<comment type="subunit">
    <text evidence="1">Forms homodimers. Interacts with ubiquitin-protein ligase UBE3A/E6-AP; this interaction stimulates UBE3A ubiquitin activity. Interacts with host BAK1.</text>
</comment>
<comment type="subcellular location">
    <subcellularLocation>
        <location evidence="1">Host cytoplasm</location>
    </subcellularLocation>
    <subcellularLocation>
        <location evidence="1">Host nucleus</location>
    </subcellularLocation>
</comment>
<comment type="similarity">
    <text evidence="1 2">Belongs to the papillomaviridae E6 protein family.</text>
</comment>
<name>VE6_HPV24</name>
<dbReference type="EMBL" id="U31782">
    <property type="protein sequence ID" value="AAA79415.1"/>
    <property type="molecule type" value="Genomic_DNA"/>
</dbReference>
<dbReference type="SMR" id="P50777"/>
<dbReference type="Proteomes" id="UP000158064">
    <property type="component" value="Genome"/>
</dbReference>
<dbReference type="GO" id="GO:0030430">
    <property type="term" value="C:host cell cytoplasm"/>
    <property type="evidence" value="ECO:0007669"/>
    <property type="project" value="UniProtKB-SubCell"/>
</dbReference>
<dbReference type="GO" id="GO:0042025">
    <property type="term" value="C:host cell nucleus"/>
    <property type="evidence" value="ECO:0007669"/>
    <property type="project" value="UniProtKB-SubCell"/>
</dbReference>
<dbReference type="GO" id="GO:0003677">
    <property type="term" value="F:DNA binding"/>
    <property type="evidence" value="ECO:0007669"/>
    <property type="project" value="UniProtKB-UniRule"/>
</dbReference>
<dbReference type="GO" id="GO:0008270">
    <property type="term" value="F:zinc ion binding"/>
    <property type="evidence" value="ECO:0007669"/>
    <property type="project" value="UniProtKB-KW"/>
</dbReference>
<dbReference type="GO" id="GO:0006351">
    <property type="term" value="P:DNA-templated transcription"/>
    <property type="evidence" value="ECO:0007669"/>
    <property type="project" value="UniProtKB-UniRule"/>
</dbReference>
<dbReference type="GO" id="GO:0006355">
    <property type="term" value="P:regulation of DNA-templated transcription"/>
    <property type="evidence" value="ECO:0007669"/>
    <property type="project" value="UniProtKB-UniRule"/>
</dbReference>
<dbReference type="GO" id="GO:0052150">
    <property type="term" value="P:symbiont-mediated perturbation of host apoptosis"/>
    <property type="evidence" value="ECO:0007669"/>
    <property type="project" value="UniProtKB-KW"/>
</dbReference>
<dbReference type="GO" id="GO:0039648">
    <property type="term" value="P:symbiont-mediated perturbation of host ubiquitin-like protein modification"/>
    <property type="evidence" value="ECO:0007669"/>
    <property type="project" value="UniProtKB-UniRule"/>
</dbReference>
<dbReference type="GO" id="GO:0052170">
    <property type="term" value="P:symbiont-mediated suppression of host innate immune response"/>
    <property type="evidence" value="ECO:0007669"/>
    <property type="project" value="UniProtKB-KW"/>
</dbReference>
<dbReference type="GO" id="GO:0039502">
    <property type="term" value="P:symbiont-mediated suppression of host type I interferon-mediated signaling pathway"/>
    <property type="evidence" value="ECO:0007669"/>
    <property type="project" value="UniProtKB-UniRule"/>
</dbReference>
<dbReference type="Gene3D" id="3.30.240.40">
    <property type="entry name" value="E6 early regulatory protein"/>
    <property type="match status" value="2"/>
</dbReference>
<dbReference type="HAMAP" id="MF_04006">
    <property type="entry name" value="HPV_E6"/>
    <property type="match status" value="1"/>
</dbReference>
<dbReference type="InterPro" id="IPR001334">
    <property type="entry name" value="E6"/>
</dbReference>
<dbReference type="InterPro" id="IPR038575">
    <property type="entry name" value="E6_sf"/>
</dbReference>
<dbReference type="Pfam" id="PF00518">
    <property type="entry name" value="E6"/>
    <property type="match status" value="1"/>
</dbReference>
<dbReference type="SUPFAM" id="SSF161229">
    <property type="entry name" value="E6 C-terminal domain-like"/>
    <property type="match status" value="2"/>
</dbReference>